<organism>
    <name type="scientific">Bacillus subtilis (strain 168)</name>
    <dbReference type="NCBI Taxonomy" id="224308"/>
    <lineage>
        <taxon>Bacteria</taxon>
        <taxon>Bacillati</taxon>
        <taxon>Bacillota</taxon>
        <taxon>Bacilli</taxon>
        <taxon>Bacillales</taxon>
        <taxon>Bacillaceae</taxon>
        <taxon>Bacillus</taxon>
    </lineage>
</organism>
<evidence type="ECO:0000255" key="1"/>
<evidence type="ECO:0000255" key="2">
    <source>
        <dbReference type="PROSITE-ProRule" id="PRU00593"/>
    </source>
</evidence>
<name>YOBQ_BACSU</name>
<accession>O34901</accession>
<accession>Q796D8</accession>
<gene>
    <name type="primary">yobQ</name>
    <name type="ordered locus">BSU19050</name>
</gene>
<keyword id="KW-0238">DNA-binding</keyword>
<keyword id="KW-1185">Reference proteome</keyword>
<keyword id="KW-0804">Transcription</keyword>
<keyword id="KW-0805">Transcription regulation</keyword>
<proteinExistence type="predicted"/>
<sequence length="241" mass="28259">MLMDSLQEIICEKRTYTRLYHSHKHAYSQFLFPLEGSIDLETEGRQVKLNPDHFLYIPPQCEHRFRSIGRNECLVLDVPLHAMKIDEYRAGSGIEAALDPFWSSIRYLLTEEAKAGTANSLHMLVQYIKEKLQSHSYASIAYIHSHLFERLTIKKLAEIEHYHPAYYSSWFKKQTGKSPQNYIADLRLEEAKRMLMERNETLTVVSEALGFQNLSSFTRWFTKSTGMPPRLYRNTLYSDKK</sequence>
<protein>
    <recommendedName>
        <fullName>Uncharacterized HTH-type transcriptional regulator YobQ</fullName>
    </recommendedName>
</protein>
<dbReference type="EMBL" id="AF027868">
    <property type="protein sequence ID" value="AAB84467.1"/>
    <property type="molecule type" value="Genomic_DNA"/>
</dbReference>
<dbReference type="EMBL" id="AL009126">
    <property type="protein sequence ID" value="CAB13797.1"/>
    <property type="molecule type" value="Genomic_DNA"/>
</dbReference>
<dbReference type="PIR" id="G69899">
    <property type="entry name" value="G69899"/>
</dbReference>
<dbReference type="RefSeq" id="NP_389786.1">
    <property type="nucleotide sequence ID" value="NC_000964.3"/>
</dbReference>
<dbReference type="RefSeq" id="WP_010886529.1">
    <property type="nucleotide sequence ID" value="NZ_OZ025638.1"/>
</dbReference>
<dbReference type="SMR" id="O34901"/>
<dbReference type="FunCoup" id="O34901">
    <property type="interactions" value="13"/>
</dbReference>
<dbReference type="STRING" id="224308.BSU19050"/>
<dbReference type="PaxDb" id="224308-BSU19050"/>
<dbReference type="EnsemblBacteria" id="CAB13797">
    <property type="protein sequence ID" value="CAB13797"/>
    <property type="gene ID" value="BSU_19050"/>
</dbReference>
<dbReference type="GeneID" id="939637"/>
<dbReference type="KEGG" id="bsu:BSU19050"/>
<dbReference type="PATRIC" id="fig|224308.43.peg.2018"/>
<dbReference type="eggNOG" id="COG0662">
    <property type="taxonomic scope" value="Bacteria"/>
</dbReference>
<dbReference type="eggNOG" id="COG2207">
    <property type="taxonomic scope" value="Bacteria"/>
</dbReference>
<dbReference type="InParanoid" id="O34901"/>
<dbReference type="OrthoDB" id="1681793at2"/>
<dbReference type="PhylomeDB" id="O34901"/>
<dbReference type="BioCyc" id="BSUB:BSU19050-MONOMER"/>
<dbReference type="Proteomes" id="UP000001570">
    <property type="component" value="Chromosome"/>
</dbReference>
<dbReference type="GO" id="GO:0003700">
    <property type="term" value="F:DNA-binding transcription factor activity"/>
    <property type="evidence" value="ECO:0007669"/>
    <property type="project" value="InterPro"/>
</dbReference>
<dbReference type="GO" id="GO:0043565">
    <property type="term" value="F:sequence-specific DNA binding"/>
    <property type="evidence" value="ECO:0007669"/>
    <property type="project" value="InterPro"/>
</dbReference>
<dbReference type="CDD" id="cd07003">
    <property type="entry name" value="cupin_YobQ-like_N"/>
    <property type="match status" value="1"/>
</dbReference>
<dbReference type="Gene3D" id="1.10.10.60">
    <property type="entry name" value="Homeodomain-like"/>
    <property type="match status" value="2"/>
</dbReference>
<dbReference type="Gene3D" id="2.60.120.10">
    <property type="entry name" value="Jelly Rolls"/>
    <property type="match status" value="1"/>
</dbReference>
<dbReference type="InterPro" id="IPR013096">
    <property type="entry name" value="Cupin_2"/>
</dbReference>
<dbReference type="InterPro" id="IPR009057">
    <property type="entry name" value="Homeodomain-like_sf"/>
</dbReference>
<dbReference type="InterPro" id="IPR018060">
    <property type="entry name" value="HTH_AraC"/>
</dbReference>
<dbReference type="InterPro" id="IPR018062">
    <property type="entry name" value="HTH_AraC-typ_CS"/>
</dbReference>
<dbReference type="InterPro" id="IPR014710">
    <property type="entry name" value="RmlC-like_jellyroll"/>
</dbReference>
<dbReference type="InterPro" id="IPR011051">
    <property type="entry name" value="RmlC_Cupin_sf"/>
</dbReference>
<dbReference type="PANTHER" id="PTHR43280">
    <property type="entry name" value="ARAC-FAMILY TRANSCRIPTIONAL REGULATOR"/>
    <property type="match status" value="1"/>
</dbReference>
<dbReference type="PANTHER" id="PTHR43280:SF26">
    <property type="entry name" value="ARAC-FAMILY TRANSCRIPTIONAL REGULATOR"/>
    <property type="match status" value="1"/>
</dbReference>
<dbReference type="Pfam" id="PF07883">
    <property type="entry name" value="Cupin_2"/>
    <property type="match status" value="1"/>
</dbReference>
<dbReference type="Pfam" id="PF12833">
    <property type="entry name" value="HTH_18"/>
    <property type="match status" value="1"/>
</dbReference>
<dbReference type="SMART" id="SM00342">
    <property type="entry name" value="HTH_ARAC"/>
    <property type="match status" value="1"/>
</dbReference>
<dbReference type="SUPFAM" id="SSF46689">
    <property type="entry name" value="Homeodomain-like"/>
    <property type="match status" value="2"/>
</dbReference>
<dbReference type="SUPFAM" id="SSF51182">
    <property type="entry name" value="RmlC-like cupins"/>
    <property type="match status" value="1"/>
</dbReference>
<dbReference type="PROSITE" id="PS00041">
    <property type="entry name" value="HTH_ARAC_FAMILY_1"/>
    <property type="match status" value="1"/>
</dbReference>
<dbReference type="PROSITE" id="PS01124">
    <property type="entry name" value="HTH_ARAC_FAMILY_2"/>
    <property type="match status" value="1"/>
</dbReference>
<feature type="chain" id="PRO_0000365021" description="Uncharacterized HTH-type transcriptional regulator YobQ">
    <location>
        <begin position="1"/>
        <end position="241"/>
    </location>
</feature>
<feature type="domain" description="Cupin type-2" evidence="1">
    <location>
        <begin position="22"/>
        <end position="78"/>
    </location>
</feature>
<feature type="domain" description="HTH araC/xylS-type" evidence="2">
    <location>
        <begin position="137"/>
        <end position="235"/>
    </location>
</feature>
<feature type="DNA-binding region" description="H-T-H motif" evidence="2">
    <location>
        <begin position="154"/>
        <end position="175"/>
    </location>
</feature>
<feature type="DNA-binding region" description="H-T-H motif" evidence="2">
    <location>
        <begin position="202"/>
        <end position="225"/>
    </location>
</feature>
<reference key="1">
    <citation type="submission" date="1997-11" db="EMBL/GenBank/DDBJ databases">
        <title>Sequence analysis of the Bacillus subtilis chromosome region between the terC and odhAB loci cloned in a yeast artificial chromosome.</title>
        <authorList>
            <person name="Lapidus A."/>
            <person name="Galleron N."/>
            <person name="Sorokin A."/>
            <person name="Ehrlich S.D."/>
        </authorList>
    </citation>
    <scope>NUCLEOTIDE SEQUENCE [GENOMIC DNA]</scope>
</reference>
<reference key="2">
    <citation type="journal article" date="1997" name="Nature">
        <title>The complete genome sequence of the Gram-positive bacterium Bacillus subtilis.</title>
        <authorList>
            <person name="Kunst F."/>
            <person name="Ogasawara N."/>
            <person name="Moszer I."/>
            <person name="Albertini A.M."/>
            <person name="Alloni G."/>
            <person name="Azevedo V."/>
            <person name="Bertero M.G."/>
            <person name="Bessieres P."/>
            <person name="Bolotin A."/>
            <person name="Borchert S."/>
            <person name="Borriss R."/>
            <person name="Boursier L."/>
            <person name="Brans A."/>
            <person name="Braun M."/>
            <person name="Brignell S.C."/>
            <person name="Bron S."/>
            <person name="Brouillet S."/>
            <person name="Bruschi C.V."/>
            <person name="Caldwell B."/>
            <person name="Capuano V."/>
            <person name="Carter N.M."/>
            <person name="Choi S.-K."/>
            <person name="Codani J.-J."/>
            <person name="Connerton I.F."/>
            <person name="Cummings N.J."/>
            <person name="Daniel R.A."/>
            <person name="Denizot F."/>
            <person name="Devine K.M."/>
            <person name="Duesterhoeft A."/>
            <person name="Ehrlich S.D."/>
            <person name="Emmerson P.T."/>
            <person name="Entian K.-D."/>
            <person name="Errington J."/>
            <person name="Fabret C."/>
            <person name="Ferrari E."/>
            <person name="Foulger D."/>
            <person name="Fritz C."/>
            <person name="Fujita M."/>
            <person name="Fujita Y."/>
            <person name="Fuma S."/>
            <person name="Galizzi A."/>
            <person name="Galleron N."/>
            <person name="Ghim S.-Y."/>
            <person name="Glaser P."/>
            <person name="Goffeau A."/>
            <person name="Golightly E.J."/>
            <person name="Grandi G."/>
            <person name="Guiseppi G."/>
            <person name="Guy B.J."/>
            <person name="Haga K."/>
            <person name="Haiech J."/>
            <person name="Harwood C.R."/>
            <person name="Henaut A."/>
            <person name="Hilbert H."/>
            <person name="Holsappel S."/>
            <person name="Hosono S."/>
            <person name="Hullo M.-F."/>
            <person name="Itaya M."/>
            <person name="Jones L.-M."/>
            <person name="Joris B."/>
            <person name="Karamata D."/>
            <person name="Kasahara Y."/>
            <person name="Klaerr-Blanchard M."/>
            <person name="Klein C."/>
            <person name="Kobayashi Y."/>
            <person name="Koetter P."/>
            <person name="Koningstein G."/>
            <person name="Krogh S."/>
            <person name="Kumano M."/>
            <person name="Kurita K."/>
            <person name="Lapidus A."/>
            <person name="Lardinois S."/>
            <person name="Lauber J."/>
            <person name="Lazarevic V."/>
            <person name="Lee S.-M."/>
            <person name="Levine A."/>
            <person name="Liu H."/>
            <person name="Masuda S."/>
            <person name="Mauel C."/>
            <person name="Medigue C."/>
            <person name="Medina N."/>
            <person name="Mellado R.P."/>
            <person name="Mizuno M."/>
            <person name="Moestl D."/>
            <person name="Nakai S."/>
            <person name="Noback M."/>
            <person name="Noone D."/>
            <person name="O'Reilly M."/>
            <person name="Ogawa K."/>
            <person name="Ogiwara A."/>
            <person name="Oudega B."/>
            <person name="Park S.-H."/>
            <person name="Parro V."/>
            <person name="Pohl T.M."/>
            <person name="Portetelle D."/>
            <person name="Porwollik S."/>
            <person name="Prescott A.M."/>
            <person name="Presecan E."/>
            <person name="Pujic P."/>
            <person name="Purnelle B."/>
            <person name="Rapoport G."/>
            <person name="Rey M."/>
            <person name="Reynolds S."/>
            <person name="Rieger M."/>
            <person name="Rivolta C."/>
            <person name="Rocha E."/>
            <person name="Roche B."/>
            <person name="Rose M."/>
            <person name="Sadaie Y."/>
            <person name="Sato T."/>
            <person name="Scanlan E."/>
            <person name="Schleich S."/>
            <person name="Schroeter R."/>
            <person name="Scoffone F."/>
            <person name="Sekiguchi J."/>
            <person name="Sekowska A."/>
            <person name="Seror S.J."/>
            <person name="Serror P."/>
            <person name="Shin B.-S."/>
            <person name="Soldo B."/>
            <person name="Sorokin A."/>
            <person name="Tacconi E."/>
            <person name="Takagi T."/>
            <person name="Takahashi H."/>
            <person name="Takemaru K."/>
            <person name="Takeuchi M."/>
            <person name="Tamakoshi A."/>
            <person name="Tanaka T."/>
            <person name="Terpstra P."/>
            <person name="Tognoni A."/>
            <person name="Tosato V."/>
            <person name="Uchiyama S."/>
            <person name="Vandenbol M."/>
            <person name="Vannier F."/>
            <person name="Vassarotti A."/>
            <person name="Viari A."/>
            <person name="Wambutt R."/>
            <person name="Wedler E."/>
            <person name="Wedler H."/>
            <person name="Weitzenegger T."/>
            <person name="Winters P."/>
            <person name="Wipat A."/>
            <person name="Yamamoto H."/>
            <person name="Yamane K."/>
            <person name="Yasumoto K."/>
            <person name="Yata K."/>
            <person name="Yoshida K."/>
            <person name="Yoshikawa H.-F."/>
            <person name="Zumstein E."/>
            <person name="Yoshikawa H."/>
            <person name="Danchin A."/>
        </authorList>
    </citation>
    <scope>NUCLEOTIDE SEQUENCE [LARGE SCALE GENOMIC DNA]</scope>
    <source>
        <strain>168</strain>
    </source>
</reference>